<comment type="function">
    <text evidence="1">Catalyzes the phosphorylation of the 3'-hydroxyl group of dephosphocoenzyme A to form coenzyme A.</text>
</comment>
<comment type="catalytic activity">
    <reaction evidence="1">
        <text>3'-dephospho-CoA + ATP = ADP + CoA + H(+)</text>
        <dbReference type="Rhea" id="RHEA:18245"/>
        <dbReference type="ChEBI" id="CHEBI:15378"/>
        <dbReference type="ChEBI" id="CHEBI:30616"/>
        <dbReference type="ChEBI" id="CHEBI:57287"/>
        <dbReference type="ChEBI" id="CHEBI:57328"/>
        <dbReference type="ChEBI" id="CHEBI:456216"/>
        <dbReference type="EC" id="2.7.1.24"/>
    </reaction>
</comment>
<comment type="pathway">
    <text evidence="1">Cofactor biosynthesis; coenzyme A biosynthesis; CoA from (R)-pantothenate: step 5/5.</text>
</comment>
<comment type="subcellular location">
    <subcellularLocation>
        <location evidence="1">Cytoplasm</location>
    </subcellularLocation>
</comment>
<comment type="similarity">
    <text evidence="1">Belongs to the CoaE family.</text>
</comment>
<organism>
    <name type="scientific">Brucella melitensis biotype 1 (strain ATCC 23456 / CCUG 17765 / NCTC 10094 / 16M)</name>
    <dbReference type="NCBI Taxonomy" id="224914"/>
    <lineage>
        <taxon>Bacteria</taxon>
        <taxon>Pseudomonadati</taxon>
        <taxon>Pseudomonadota</taxon>
        <taxon>Alphaproteobacteria</taxon>
        <taxon>Hyphomicrobiales</taxon>
        <taxon>Brucellaceae</taxon>
        <taxon>Brucella/Ochrobactrum group</taxon>
        <taxon>Brucella</taxon>
    </lineage>
</organism>
<accession>P63824</accession>
<accession>Q8YE21</accession>
<proteinExistence type="inferred from homology"/>
<protein>
    <recommendedName>
        <fullName evidence="1">Dephospho-CoA kinase</fullName>
        <ecNumber evidence="1">2.7.1.24</ecNumber>
    </recommendedName>
    <alternativeName>
        <fullName evidence="1">Dephosphocoenzyme A kinase</fullName>
    </alternativeName>
</protein>
<name>COAE_BRUME</name>
<dbReference type="EC" id="2.7.1.24" evidence="1"/>
<dbReference type="EMBL" id="AE008917">
    <property type="protein sequence ID" value="AAL53238.1"/>
    <property type="molecule type" value="Genomic_DNA"/>
</dbReference>
<dbReference type="PIR" id="AC3509">
    <property type="entry name" value="AC3509"/>
</dbReference>
<dbReference type="RefSeq" id="WP_004684536.1">
    <property type="nucleotide sequence ID" value="NZ_GG703778.1"/>
</dbReference>
<dbReference type="SMR" id="P63824"/>
<dbReference type="GeneID" id="55591640"/>
<dbReference type="KEGG" id="bme:BMEI2057"/>
<dbReference type="KEGG" id="bmel:DK63_1437"/>
<dbReference type="PATRIC" id="fig|224914.52.peg.1513"/>
<dbReference type="eggNOG" id="COG0237">
    <property type="taxonomic scope" value="Bacteria"/>
</dbReference>
<dbReference type="PhylomeDB" id="P63824"/>
<dbReference type="UniPathway" id="UPA00241">
    <property type="reaction ID" value="UER00356"/>
</dbReference>
<dbReference type="Proteomes" id="UP000000419">
    <property type="component" value="Chromosome I"/>
</dbReference>
<dbReference type="GO" id="GO:0005737">
    <property type="term" value="C:cytoplasm"/>
    <property type="evidence" value="ECO:0007669"/>
    <property type="project" value="UniProtKB-SubCell"/>
</dbReference>
<dbReference type="GO" id="GO:0005524">
    <property type="term" value="F:ATP binding"/>
    <property type="evidence" value="ECO:0007669"/>
    <property type="project" value="UniProtKB-UniRule"/>
</dbReference>
<dbReference type="GO" id="GO:0004140">
    <property type="term" value="F:dephospho-CoA kinase activity"/>
    <property type="evidence" value="ECO:0007669"/>
    <property type="project" value="UniProtKB-UniRule"/>
</dbReference>
<dbReference type="GO" id="GO:0015937">
    <property type="term" value="P:coenzyme A biosynthetic process"/>
    <property type="evidence" value="ECO:0007669"/>
    <property type="project" value="UniProtKB-UniRule"/>
</dbReference>
<dbReference type="CDD" id="cd02022">
    <property type="entry name" value="DPCK"/>
    <property type="match status" value="1"/>
</dbReference>
<dbReference type="Gene3D" id="3.40.50.300">
    <property type="entry name" value="P-loop containing nucleotide triphosphate hydrolases"/>
    <property type="match status" value="1"/>
</dbReference>
<dbReference type="HAMAP" id="MF_00376">
    <property type="entry name" value="Dephospho_CoA_kinase"/>
    <property type="match status" value="1"/>
</dbReference>
<dbReference type="InterPro" id="IPR001977">
    <property type="entry name" value="Depp_CoAkinase"/>
</dbReference>
<dbReference type="InterPro" id="IPR027417">
    <property type="entry name" value="P-loop_NTPase"/>
</dbReference>
<dbReference type="NCBIfam" id="TIGR00152">
    <property type="entry name" value="dephospho-CoA kinase"/>
    <property type="match status" value="1"/>
</dbReference>
<dbReference type="PANTHER" id="PTHR10695:SF46">
    <property type="entry name" value="BIFUNCTIONAL COENZYME A SYNTHASE-RELATED"/>
    <property type="match status" value="1"/>
</dbReference>
<dbReference type="PANTHER" id="PTHR10695">
    <property type="entry name" value="DEPHOSPHO-COA KINASE-RELATED"/>
    <property type="match status" value="1"/>
</dbReference>
<dbReference type="Pfam" id="PF01121">
    <property type="entry name" value="CoaE"/>
    <property type="match status" value="1"/>
</dbReference>
<dbReference type="SUPFAM" id="SSF52540">
    <property type="entry name" value="P-loop containing nucleoside triphosphate hydrolases"/>
    <property type="match status" value="1"/>
</dbReference>
<dbReference type="PROSITE" id="PS51219">
    <property type="entry name" value="DPCK"/>
    <property type="match status" value="1"/>
</dbReference>
<feature type="chain" id="PRO_0000172917" description="Dephospho-CoA kinase">
    <location>
        <begin position="1"/>
        <end position="200"/>
    </location>
</feature>
<feature type="domain" description="DPCK" evidence="1">
    <location>
        <begin position="3"/>
        <end position="200"/>
    </location>
</feature>
<feature type="binding site" evidence="1">
    <location>
        <begin position="11"/>
        <end position="16"/>
    </location>
    <ligand>
        <name>ATP</name>
        <dbReference type="ChEBI" id="CHEBI:30616"/>
    </ligand>
</feature>
<gene>
    <name evidence="1" type="primary">coaE</name>
    <name type="ordered locus">BMEI2057</name>
</gene>
<reference key="1">
    <citation type="journal article" date="2002" name="Proc. Natl. Acad. Sci. U.S.A.">
        <title>The genome sequence of the facultative intracellular pathogen Brucella melitensis.</title>
        <authorList>
            <person name="DelVecchio V.G."/>
            <person name="Kapatral V."/>
            <person name="Redkar R.J."/>
            <person name="Patra G."/>
            <person name="Mujer C."/>
            <person name="Los T."/>
            <person name="Ivanova N."/>
            <person name="Anderson I."/>
            <person name="Bhattacharyya A."/>
            <person name="Lykidis A."/>
            <person name="Reznik G."/>
            <person name="Jablonski L."/>
            <person name="Larsen N."/>
            <person name="D'Souza M."/>
            <person name="Bernal A."/>
            <person name="Mazur M."/>
            <person name="Goltsman E."/>
            <person name="Selkov E."/>
            <person name="Elzer P.H."/>
            <person name="Hagius S."/>
            <person name="O'Callaghan D."/>
            <person name="Letesson J.-J."/>
            <person name="Haselkorn R."/>
            <person name="Kyrpides N.C."/>
            <person name="Overbeek R."/>
        </authorList>
    </citation>
    <scope>NUCLEOTIDE SEQUENCE [LARGE SCALE GENOMIC DNA]</scope>
    <source>
        <strain>ATCC 23456 / CCUG 17765 / NCTC 10094 / 16M</strain>
    </source>
</reference>
<evidence type="ECO:0000255" key="1">
    <source>
        <dbReference type="HAMAP-Rule" id="MF_00376"/>
    </source>
</evidence>
<keyword id="KW-0067">ATP-binding</keyword>
<keyword id="KW-0173">Coenzyme A biosynthesis</keyword>
<keyword id="KW-0963">Cytoplasm</keyword>
<keyword id="KW-0418">Kinase</keyword>
<keyword id="KW-0547">Nucleotide-binding</keyword>
<keyword id="KW-0808">Transferase</keyword>
<sequence length="200" mass="21441">MIVLGLTGSIGMGKTTAAGMFAEAGVPVYSADDAVHRLYSGRAAPLIEATFPGTVENGIVNREKLFKAVIGQPEAIKKLEAVVHPLVREEEDAFRREAEKSGAAIALVDIPLLFETGAEKRVDKVVVVSAPADIQHTRVLARPGMTQEKLKAILVRQIPDAEKRSRADFVLDTSGSFDDLRRQIAEIITGLSGKPAAATR</sequence>